<evidence type="ECO:0000250" key="1"/>
<evidence type="ECO:0000255" key="2">
    <source>
        <dbReference type="HAMAP-Rule" id="MF_00118"/>
    </source>
</evidence>
<protein>
    <recommendedName>
        <fullName evidence="2">Elongation factor Tu</fullName>
        <shortName evidence="2">EF-Tu</shortName>
        <ecNumber evidence="2">3.6.5.3</ecNumber>
    </recommendedName>
</protein>
<gene>
    <name evidence="2" type="primary">tuf</name>
    <name type="ordered locus">SSP2207</name>
</gene>
<name>EFTU_STAS1</name>
<dbReference type="EC" id="3.6.5.3" evidence="2"/>
<dbReference type="EMBL" id="AP008934">
    <property type="protein sequence ID" value="BAE19352.1"/>
    <property type="molecule type" value="Genomic_DNA"/>
</dbReference>
<dbReference type="RefSeq" id="WP_002484153.1">
    <property type="nucleotide sequence ID" value="NZ_MTGA01000039.1"/>
</dbReference>
<dbReference type="SMR" id="Q49V58"/>
<dbReference type="GeneID" id="66868361"/>
<dbReference type="KEGG" id="ssp:SSP2207"/>
<dbReference type="eggNOG" id="COG0050">
    <property type="taxonomic scope" value="Bacteria"/>
</dbReference>
<dbReference type="HOGENOM" id="CLU_007265_0_0_9"/>
<dbReference type="OrthoDB" id="9804504at2"/>
<dbReference type="Proteomes" id="UP000006371">
    <property type="component" value="Chromosome"/>
</dbReference>
<dbReference type="GO" id="GO:0005829">
    <property type="term" value="C:cytosol"/>
    <property type="evidence" value="ECO:0007669"/>
    <property type="project" value="TreeGrafter"/>
</dbReference>
<dbReference type="GO" id="GO:0005525">
    <property type="term" value="F:GTP binding"/>
    <property type="evidence" value="ECO:0007669"/>
    <property type="project" value="UniProtKB-UniRule"/>
</dbReference>
<dbReference type="GO" id="GO:0003924">
    <property type="term" value="F:GTPase activity"/>
    <property type="evidence" value="ECO:0007669"/>
    <property type="project" value="InterPro"/>
</dbReference>
<dbReference type="GO" id="GO:0003746">
    <property type="term" value="F:translation elongation factor activity"/>
    <property type="evidence" value="ECO:0007669"/>
    <property type="project" value="UniProtKB-UniRule"/>
</dbReference>
<dbReference type="CDD" id="cd01884">
    <property type="entry name" value="EF_Tu"/>
    <property type="match status" value="1"/>
</dbReference>
<dbReference type="CDD" id="cd03697">
    <property type="entry name" value="EFTU_II"/>
    <property type="match status" value="1"/>
</dbReference>
<dbReference type="CDD" id="cd03707">
    <property type="entry name" value="EFTU_III"/>
    <property type="match status" value="1"/>
</dbReference>
<dbReference type="FunFam" id="2.40.30.10:FF:000001">
    <property type="entry name" value="Elongation factor Tu"/>
    <property type="match status" value="1"/>
</dbReference>
<dbReference type="FunFam" id="3.40.50.300:FF:000003">
    <property type="entry name" value="Elongation factor Tu"/>
    <property type="match status" value="1"/>
</dbReference>
<dbReference type="Gene3D" id="3.40.50.300">
    <property type="entry name" value="P-loop containing nucleotide triphosphate hydrolases"/>
    <property type="match status" value="1"/>
</dbReference>
<dbReference type="Gene3D" id="2.40.30.10">
    <property type="entry name" value="Translation factors"/>
    <property type="match status" value="2"/>
</dbReference>
<dbReference type="HAMAP" id="MF_00118_B">
    <property type="entry name" value="EF_Tu_B"/>
    <property type="match status" value="1"/>
</dbReference>
<dbReference type="InterPro" id="IPR041709">
    <property type="entry name" value="EF-Tu_GTP-bd"/>
</dbReference>
<dbReference type="InterPro" id="IPR050055">
    <property type="entry name" value="EF-Tu_GTPase"/>
</dbReference>
<dbReference type="InterPro" id="IPR004161">
    <property type="entry name" value="EFTu-like_2"/>
</dbReference>
<dbReference type="InterPro" id="IPR033720">
    <property type="entry name" value="EFTU_2"/>
</dbReference>
<dbReference type="InterPro" id="IPR031157">
    <property type="entry name" value="G_TR_CS"/>
</dbReference>
<dbReference type="InterPro" id="IPR027417">
    <property type="entry name" value="P-loop_NTPase"/>
</dbReference>
<dbReference type="InterPro" id="IPR005225">
    <property type="entry name" value="Small_GTP-bd"/>
</dbReference>
<dbReference type="InterPro" id="IPR000795">
    <property type="entry name" value="T_Tr_GTP-bd_dom"/>
</dbReference>
<dbReference type="InterPro" id="IPR009000">
    <property type="entry name" value="Transl_B-barrel_sf"/>
</dbReference>
<dbReference type="InterPro" id="IPR009001">
    <property type="entry name" value="Transl_elong_EF1A/Init_IF2_C"/>
</dbReference>
<dbReference type="InterPro" id="IPR004541">
    <property type="entry name" value="Transl_elong_EFTu/EF1A_bac/org"/>
</dbReference>
<dbReference type="InterPro" id="IPR004160">
    <property type="entry name" value="Transl_elong_EFTu/EF1A_C"/>
</dbReference>
<dbReference type="NCBIfam" id="TIGR00485">
    <property type="entry name" value="EF-Tu"/>
    <property type="match status" value="1"/>
</dbReference>
<dbReference type="NCBIfam" id="NF000766">
    <property type="entry name" value="PRK00049.1"/>
    <property type="match status" value="1"/>
</dbReference>
<dbReference type="NCBIfam" id="NF009372">
    <property type="entry name" value="PRK12735.1"/>
    <property type="match status" value="1"/>
</dbReference>
<dbReference type="NCBIfam" id="NF009373">
    <property type="entry name" value="PRK12736.1"/>
    <property type="match status" value="1"/>
</dbReference>
<dbReference type="NCBIfam" id="TIGR00231">
    <property type="entry name" value="small_GTP"/>
    <property type="match status" value="1"/>
</dbReference>
<dbReference type="PANTHER" id="PTHR43721:SF22">
    <property type="entry name" value="ELONGATION FACTOR TU, MITOCHONDRIAL"/>
    <property type="match status" value="1"/>
</dbReference>
<dbReference type="PANTHER" id="PTHR43721">
    <property type="entry name" value="ELONGATION FACTOR TU-RELATED"/>
    <property type="match status" value="1"/>
</dbReference>
<dbReference type="Pfam" id="PF00009">
    <property type="entry name" value="GTP_EFTU"/>
    <property type="match status" value="1"/>
</dbReference>
<dbReference type="Pfam" id="PF03144">
    <property type="entry name" value="GTP_EFTU_D2"/>
    <property type="match status" value="1"/>
</dbReference>
<dbReference type="Pfam" id="PF03143">
    <property type="entry name" value="GTP_EFTU_D3"/>
    <property type="match status" value="1"/>
</dbReference>
<dbReference type="PRINTS" id="PR00315">
    <property type="entry name" value="ELONGATNFCT"/>
</dbReference>
<dbReference type="SUPFAM" id="SSF50465">
    <property type="entry name" value="EF-Tu/eEF-1alpha/eIF2-gamma C-terminal domain"/>
    <property type="match status" value="1"/>
</dbReference>
<dbReference type="SUPFAM" id="SSF52540">
    <property type="entry name" value="P-loop containing nucleoside triphosphate hydrolases"/>
    <property type="match status" value="1"/>
</dbReference>
<dbReference type="SUPFAM" id="SSF50447">
    <property type="entry name" value="Translation proteins"/>
    <property type="match status" value="1"/>
</dbReference>
<dbReference type="PROSITE" id="PS00301">
    <property type="entry name" value="G_TR_1"/>
    <property type="match status" value="1"/>
</dbReference>
<dbReference type="PROSITE" id="PS51722">
    <property type="entry name" value="G_TR_2"/>
    <property type="match status" value="1"/>
</dbReference>
<accession>Q49V58</accession>
<feature type="chain" id="PRO_1000015754" description="Elongation factor Tu">
    <location>
        <begin position="1"/>
        <end position="395"/>
    </location>
</feature>
<feature type="domain" description="tr-type G">
    <location>
        <begin position="10"/>
        <end position="204"/>
    </location>
</feature>
<feature type="region of interest" description="G1" evidence="1">
    <location>
        <begin position="19"/>
        <end position="26"/>
    </location>
</feature>
<feature type="region of interest" description="G2" evidence="1">
    <location>
        <begin position="60"/>
        <end position="64"/>
    </location>
</feature>
<feature type="region of interest" description="G3" evidence="1">
    <location>
        <begin position="81"/>
        <end position="84"/>
    </location>
</feature>
<feature type="region of interest" description="G4" evidence="1">
    <location>
        <begin position="136"/>
        <end position="139"/>
    </location>
</feature>
<feature type="region of interest" description="G5" evidence="1">
    <location>
        <begin position="174"/>
        <end position="176"/>
    </location>
</feature>
<feature type="binding site" evidence="2">
    <location>
        <begin position="19"/>
        <end position="26"/>
    </location>
    <ligand>
        <name>GTP</name>
        <dbReference type="ChEBI" id="CHEBI:37565"/>
    </ligand>
</feature>
<feature type="binding site" evidence="2">
    <location>
        <position position="26"/>
    </location>
    <ligand>
        <name>Mg(2+)</name>
        <dbReference type="ChEBI" id="CHEBI:18420"/>
    </ligand>
</feature>
<feature type="binding site" evidence="2">
    <location>
        <begin position="81"/>
        <end position="85"/>
    </location>
    <ligand>
        <name>GTP</name>
        <dbReference type="ChEBI" id="CHEBI:37565"/>
    </ligand>
</feature>
<feature type="binding site" evidence="2">
    <location>
        <begin position="136"/>
        <end position="139"/>
    </location>
    <ligand>
        <name>GTP</name>
        <dbReference type="ChEBI" id="CHEBI:37565"/>
    </ligand>
</feature>
<organism>
    <name type="scientific">Staphylococcus saprophyticus subsp. saprophyticus (strain ATCC 15305 / DSM 20229 / NCIMB 8711 / NCTC 7292 / S-41)</name>
    <dbReference type="NCBI Taxonomy" id="342451"/>
    <lineage>
        <taxon>Bacteria</taxon>
        <taxon>Bacillati</taxon>
        <taxon>Bacillota</taxon>
        <taxon>Bacilli</taxon>
        <taxon>Bacillales</taxon>
        <taxon>Staphylococcaceae</taxon>
        <taxon>Staphylococcus</taxon>
    </lineage>
</organism>
<proteinExistence type="inferred from homology"/>
<reference key="1">
    <citation type="journal article" date="2005" name="Proc. Natl. Acad. Sci. U.S.A.">
        <title>Whole genome sequence of Staphylococcus saprophyticus reveals the pathogenesis of uncomplicated urinary tract infection.</title>
        <authorList>
            <person name="Kuroda M."/>
            <person name="Yamashita A."/>
            <person name="Hirakawa H."/>
            <person name="Kumano M."/>
            <person name="Morikawa K."/>
            <person name="Higashide M."/>
            <person name="Maruyama A."/>
            <person name="Inose Y."/>
            <person name="Matoba K."/>
            <person name="Toh H."/>
            <person name="Kuhara S."/>
            <person name="Hattori M."/>
            <person name="Ohta T."/>
        </authorList>
    </citation>
    <scope>NUCLEOTIDE SEQUENCE [LARGE SCALE GENOMIC DNA]</scope>
    <source>
        <strain>ATCC 15305 / DSM 20229 / NCIMB 8711 / NCTC 7292 / S-41</strain>
    </source>
</reference>
<keyword id="KW-0963">Cytoplasm</keyword>
<keyword id="KW-0251">Elongation factor</keyword>
<keyword id="KW-0342">GTP-binding</keyword>
<keyword id="KW-0378">Hydrolase</keyword>
<keyword id="KW-0460">Magnesium</keyword>
<keyword id="KW-0479">Metal-binding</keyword>
<keyword id="KW-0547">Nucleotide-binding</keyword>
<keyword id="KW-0648">Protein biosynthesis</keyword>
<keyword id="KW-1185">Reference proteome</keyword>
<sequence length="395" mass="43222">MAKEKFDRSKEHANIGTIGHVDHGKTTLTAAIATVLAKNGDSVAQSYDMIDNAPEEKERGITINTSHIEYTTDKRHYAHVDCPGHADYVKNMITGAAQMDGAILVVSAADGPMPQTREHILLSRNVGVPALVVFLNKVDMVDDEELLELVEMEVRDLLSEYDFPGDDVPVISGSALKALEGDADYEQKILDLMQAVDDFIPTPERDSDKPFMMPVEDVFSITGRGTVATGRVERGQIKVGEEIEIIGMQEESSKTTVTGVEMFRKLLDYAEAGDNIGALLRGVSRDDVQRGQVLAAPGTITPHTKFKADVYVLSKDEGGRHTPFFTNYRPQFYFRTTDVTGVVNLPEGTEMVMPGDNVEMDVELISPIAIEDGTRFSIREGGRTVGSGVVTVINE</sequence>
<comment type="function">
    <text evidence="2">GTP hydrolase that promotes the GTP-dependent binding of aminoacyl-tRNA to the A-site of ribosomes during protein biosynthesis.</text>
</comment>
<comment type="catalytic activity">
    <reaction evidence="2">
        <text>GTP + H2O = GDP + phosphate + H(+)</text>
        <dbReference type="Rhea" id="RHEA:19669"/>
        <dbReference type="ChEBI" id="CHEBI:15377"/>
        <dbReference type="ChEBI" id="CHEBI:15378"/>
        <dbReference type="ChEBI" id="CHEBI:37565"/>
        <dbReference type="ChEBI" id="CHEBI:43474"/>
        <dbReference type="ChEBI" id="CHEBI:58189"/>
        <dbReference type="EC" id="3.6.5.3"/>
    </reaction>
    <physiologicalReaction direction="left-to-right" evidence="2">
        <dbReference type="Rhea" id="RHEA:19670"/>
    </physiologicalReaction>
</comment>
<comment type="subunit">
    <text evidence="2">Monomer.</text>
</comment>
<comment type="subcellular location">
    <subcellularLocation>
        <location evidence="2">Cytoplasm</location>
    </subcellularLocation>
</comment>
<comment type="similarity">
    <text evidence="2">Belongs to the TRAFAC class translation factor GTPase superfamily. Classic translation factor GTPase family. EF-Tu/EF-1A subfamily.</text>
</comment>